<organism>
    <name type="scientific">Rubrobacter xylanophilus (strain DSM 9941 / JCM 11954 / NBRC 16129 / PRD-1)</name>
    <dbReference type="NCBI Taxonomy" id="266117"/>
    <lineage>
        <taxon>Bacteria</taxon>
        <taxon>Bacillati</taxon>
        <taxon>Actinomycetota</taxon>
        <taxon>Rubrobacteria</taxon>
        <taxon>Rubrobacterales</taxon>
        <taxon>Rubrobacteraceae</taxon>
        <taxon>Rubrobacter</taxon>
    </lineage>
</organism>
<keyword id="KW-0963">Cytoplasm</keyword>
<keyword id="KW-0489">Methyltransferase</keyword>
<keyword id="KW-1185">Reference proteome</keyword>
<keyword id="KW-0698">rRNA processing</keyword>
<keyword id="KW-0949">S-adenosyl-L-methionine</keyword>
<keyword id="KW-0808">Transferase</keyword>
<sequence>MIRRATIVAVGRLRGWAAEGCEDYLRRLRRYFPVEVIEVAEADMNRLGRGEALREEAGRLLRRLPADAHVVALDRKTGRRYGSEELARRRLEPLAVSGRGHVAFVIGGPLGLAPEVLERADERWSFGEITLPHALARVVLLEQLYRAVKILRGERYHW</sequence>
<gene>
    <name evidence="1" type="primary">rlmH</name>
    <name type="ordered locus">Rxyl_1662</name>
</gene>
<evidence type="ECO:0000255" key="1">
    <source>
        <dbReference type="HAMAP-Rule" id="MF_00658"/>
    </source>
</evidence>
<proteinExistence type="inferred from homology"/>
<accession>Q1AVF5</accession>
<feature type="chain" id="PRO_0000260602" description="Ribosomal RNA large subunit methyltransferase H">
    <location>
        <begin position="1"/>
        <end position="158"/>
    </location>
</feature>
<feature type="binding site" evidence="1">
    <location>
        <position position="73"/>
    </location>
    <ligand>
        <name>S-adenosyl-L-methionine</name>
        <dbReference type="ChEBI" id="CHEBI:59789"/>
    </ligand>
</feature>
<feature type="binding site" evidence="1">
    <location>
        <position position="107"/>
    </location>
    <ligand>
        <name>S-adenosyl-L-methionine</name>
        <dbReference type="ChEBI" id="CHEBI:59789"/>
    </ligand>
</feature>
<feature type="binding site" evidence="1">
    <location>
        <begin position="126"/>
        <end position="131"/>
    </location>
    <ligand>
        <name>S-adenosyl-L-methionine</name>
        <dbReference type="ChEBI" id="CHEBI:59789"/>
    </ligand>
</feature>
<dbReference type="EC" id="2.1.1.177" evidence="1"/>
<dbReference type="EMBL" id="CP000386">
    <property type="protein sequence ID" value="ABG04623.1"/>
    <property type="molecule type" value="Genomic_DNA"/>
</dbReference>
<dbReference type="RefSeq" id="WP_011564640.1">
    <property type="nucleotide sequence ID" value="NC_008148.1"/>
</dbReference>
<dbReference type="SMR" id="Q1AVF5"/>
<dbReference type="STRING" id="266117.Rxyl_1662"/>
<dbReference type="KEGG" id="rxy:Rxyl_1662"/>
<dbReference type="eggNOG" id="COG1576">
    <property type="taxonomic scope" value="Bacteria"/>
</dbReference>
<dbReference type="HOGENOM" id="CLU_100552_1_0_11"/>
<dbReference type="PhylomeDB" id="Q1AVF5"/>
<dbReference type="Proteomes" id="UP000006637">
    <property type="component" value="Chromosome"/>
</dbReference>
<dbReference type="GO" id="GO:0005737">
    <property type="term" value="C:cytoplasm"/>
    <property type="evidence" value="ECO:0007669"/>
    <property type="project" value="UniProtKB-SubCell"/>
</dbReference>
<dbReference type="GO" id="GO:0070038">
    <property type="term" value="F:rRNA (pseudouridine-N3-)-methyltransferase activity"/>
    <property type="evidence" value="ECO:0007669"/>
    <property type="project" value="UniProtKB-UniRule"/>
</dbReference>
<dbReference type="CDD" id="cd18081">
    <property type="entry name" value="RlmH-like"/>
    <property type="match status" value="1"/>
</dbReference>
<dbReference type="Gene3D" id="3.40.1280.10">
    <property type="match status" value="1"/>
</dbReference>
<dbReference type="HAMAP" id="MF_00658">
    <property type="entry name" value="23SrRNA_methyltr_H"/>
    <property type="match status" value="1"/>
</dbReference>
<dbReference type="InterPro" id="IPR029028">
    <property type="entry name" value="Alpha/beta_knot_MTases"/>
</dbReference>
<dbReference type="InterPro" id="IPR003742">
    <property type="entry name" value="RlmH-like"/>
</dbReference>
<dbReference type="InterPro" id="IPR029026">
    <property type="entry name" value="tRNA_m1G_MTases_N"/>
</dbReference>
<dbReference type="PANTHER" id="PTHR33603">
    <property type="entry name" value="METHYLTRANSFERASE"/>
    <property type="match status" value="1"/>
</dbReference>
<dbReference type="PANTHER" id="PTHR33603:SF1">
    <property type="entry name" value="RIBOSOMAL RNA LARGE SUBUNIT METHYLTRANSFERASE H"/>
    <property type="match status" value="1"/>
</dbReference>
<dbReference type="Pfam" id="PF02590">
    <property type="entry name" value="SPOUT_MTase"/>
    <property type="match status" value="1"/>
</dbReference>
<dbReference type="PIRSF" id="PIRSF004505">
    <property type="entry name" value="MT_bac"/>
    <property type="match status" value="1"/>
</dbReference>
<dbReference type="SUPFAM" id="SSF75217">
    <property type="entry name" value="alpha/beta knot"/>
    <property type="match status" value="1"/>
</dbReference>
<reference key="1">
    <citation type="submission" date="2006-06" db="EMBL/GenBank/DDBJ databases">
        <title>Complete sequence of Rubrobacter xylanophilus DSM 9941.</title>
        <authorList>
            <consortium name="US DOE Joint Genome Institute"/>
            <person name="Copeland A."/>
            <person name="Lucas S."/>
            <person name="Lapidus A."/>
            <person name="Barry K."/>
            <person name="Detter J.C."/>
            <person name="Glavina del Rio T."/>
            <person name="Hammon N."/>
            <person name="Israni S."/>
            <person name="Dalin E."/>
            <person name="Tice H."/>
            <person name="Pitluck S."/>
            <person name="Munk A.C."/>
            <person name="Brettin T."/>
            <person name="Bruce D."/>
            <person name="Han C."/>
            <person name="Tapia R."/>
            <person name="Gilna P."/>
            <person name="Schmutz J."/>
            <person name="Larimer F."/>
            <person name="Land M."/>
            <person name="Hauser L."/>
            <person name="Kyrpides N."/>
            <person name="Lykidis A."/>
            <person name="da Costa M.S."/>
            <person name="Rainey F.A."/>
            <person name="Empadinhas N."/>
            <person name="Jolivet E."/>
            <person name="Battista J.R."/>
            <person name="Richardson P."/>
        </authorList>
    </citation>
    <scope>NUCLEOTIDE SEQUENCE [LARGE SCALE GENOMIC DNA]</scope>
    <source>
        <strain>DSM 9941 / JCM 11954 / NBRC 16129 / PRD-1</strain>
    </source>
</reference>
<protein>
    <recommendedName>
        <fullName evidence="1">Ribosomal RNA large subunit methyltransferase H</fullName>
        <ecNumber evidence="1">2.1.1.177</ecNumber>
    </recommendedName>
    <alternativeName>
        <fullName evidence="1">23S rRNA (pseudouridine1915-N3)-methyltransferase</fullName>
    </alternativeName>
    <alternativeName>
        <fullName evidence="1">23S rRNA m3Psi1915 methyltransferase</fullName>
    </alternativeName>
    <alternativeName>
        <fullName evidence="1">rRNA (pseudouridine-N3-)-methyltransferase RlmH</fullName>
    </alternativeName>
</protein>
<comment type="function">
    <text evidence="1">Specifically methylates the pseudouridine at position 1915 (m3Psi1915) in 23S rRNA.</text>
</comment>
<comment type="catalytic activity">
    <reaction evidence="1">
        <text>pseudouridine(1915) in 23S rRNA + S-adenosyl-L-methionine = N(3)-methylpseudouridine(1915) in 23S rRNA + S-adenosyl-L-homocysteine + H(+)</text>
        <dbReference type="Rhea" id="RHEA:42752"/>
        <dbReference type="Rhea" id="RHEA-COMP:10221"/>
        <dbReference type="Rhea" id="RHEA-COMP:10222"/>
        <dbReference type="ChEBI" id="CHEBI:15378"/>
        <dbReference type="ChEBI" id="CHEBI:57856"/>
        <dbReference type="ChEBI" id="CHEBI:59789"/>
        <dbReference type="ChEBI" id="CHEBI:65314"/>
        <dbReference type="ChEBI" id="CHEBI:74486"/>
        <dbReference type="EC" id="2.1.1.177"/>
    </reaction>
</comment>
<comment type="subunit">
    <text evidence="1">Homodimer.</text>
</comment>
<comment type="subcellular location">
    <subcellularLocation>
        <location evidence="1">Cytoplasm</location>
    </subcellularLocation>
</comment>
<comment type="similarity">
    <text evidence="1">Belongs to the RNA methyltransferase RlmH family.</text>
</comment>
<name>RLMH_RUBXD</name>